<name>RS21_SHIBS</name>
<organism>
    <name type="scientific">Shigella boydii serotype 4 (strain Sb227)</name>
    <dbReference type="NCBI Taxonomy" id="300268"/>
    <lineage>
        <taxon>Bacteria</taxon>
        <taxon>Pseudomonadati</taxon>
        <taxon>Pseudomonadota</taxon>
        <taxon>Gammaproteobacteria</taxon>
        <taxon>Enterobacterales</taxon>
        <taxon>Enterobacteriaceae</taxon>
        <taxon>Shigella</taxon>
    </lineage>
</organism>
<reference key="1">
    <citation type="journal article" date="2005" name="Nucleic Acids Res.">
        <title>Genome dynamics and diversity of Shigella species, the etiologic agents of bacillary dysentery.</title>
        <authorList>
            <person name="Yang F."/>
            <person name="Yang J."/>
            <person name="Zhang X."/>
            <person name="Chen L."/>
            <person name="Jiang Y."/>
            <person name="Yan Y."/>
            <person name="Tang X."/>
            <person name="Wang J."/>
            <person name="Xiong Z."/>
            <person name="Dong J."/>
            <person name="Xue Y."/>
            <person name="Zhu Y."/>
            <person name="Xu X."/>
            <person name="Sun L."/>
            <person name="Chen S."/>
            <person name="Nie H."/>
            <person name="Peng J."/>
            <person name="Xu J."/>
            <person name="Wang Y."/>
            <person name="Yuan Z."/>
            <person name="Wen Y."/>
            <person name="Yao Z."/>
            <person name="Shen Y."/>
            <person name="Qiang B."/>
            <person name="Hou Y."/>
            <person name="Yu J."/>
            <person name="Jin Q."/>
        </authorList>
    </citation>
    <scope>NUCLEOTIDE SEQUENCE [LARGE SCALE GENOMIC DNA]</scope>
    <source>
        <strain>Sb227</strain>
    </source>
</reference>
<evidence type="ECO:0000250" key="1"/>
<evidence type="ECO:0000255" key="2">
    <source>
        <dbReference type="HAMAP-Rule" id="MF_00358"/>
    </source>
</evidence>
<evidence type="ECO:0000256" key="3">
    <source>
        <dbReference type="SAM" id="MobiDB-lite"/>
    </source>
</evidence>
<evidence type="ECO:0000305" key="4"/>
<feature type="initiator methionine" description="Removed" evidence="1">
    <location>
        <position position="1"/>
    </location>
</feature>
<feature type="chain" id="PRO_0000266764" description="Small ribosomal subunit protein bS21">
    <location>
        <begin position="2"/>
        <end position="71"/>
    </location>
</feature>
<feature type="region of interest" description="Disordered" evidence="3">
    <location>
        <begin position="43"/>
        <end position="71"/>
    </location>
</feature>
<feature type="compositionally biased region" description="Basic residues" evidence="3">
    <location>
        <begin position="46"/>
        <end position="59"/>
    </location>
</feature>
<feature type="compositionally biased region" description="Basic and acidic residues" evidence="3">
    <location>
        <begin position="60"/>
        <end position="71"/>
    </location>
</feature>
<comment type="similarity">
    <text evidence="2">Belongs to the bacterial ribosomal protein bS21 family.</text>
</comment>
<sequence>MPVIKVRENEPFDVALRRFKRSCEKAGVLAEVRRREFYEKPTTERKRAKASAVKRHAKKLARENARRTRLY</sequence>
<proteinExistence type="inferred from homology"/>
<keyword id="KW-0687">Ribonucleoprotein</keyword>
<keyword id="KW-0689">Ribosomal protein</keyword>
<accession>Q31WW9</accession>
<dbReference type="EMBL" id="CP000036">
    <property type="protein sequence ID" value="ABB67439.1"/>
    <property type="molecule type" value="Genomic_DNA"/>
</dbReference>
<dbReference type="RefSeq" id="WP_001144069.1">
    <property type="nucleotide sequence ID" value="NC_007613.1"/>
</dbReference>
<dbReference type="SMR" id="Q31WW9"/>
<dbReference type="GeneID" id="98390195"/>
<dbReference type="KEGG" id="sbo:SBO_2923"/>
<dbReference type="HOGENOM" id="CLU_159258_1_0_6"/>
<dbReference type="Proteomes" id="UP000007067">
    <property type="component" value="Chromosome"/>
</dbReference>
<dbReference type="GO" id="GO:1990904">
    <property type="term" value="C:ribonucleoprotein complex"/>
    <property type="evidence" value="ECO:0007669"/>
    <property type="project" value="UniProtKB-KW"/>
</dbReference>
<dbReference type="GO" id="GO:0005840">
    <property type="term" value="C:ribosome"/>
    <property type="evidence" value="ECO:0007669"/>
    <property type="project" value="UniProtKB-KW"/>
</dbReference>
<dbReference type="GO" id="GO:0003735">
    <property type="term" value="F:structural constituent of ribosome"/>
    <property type="evidence" value="ECO:0007669"/>
    <property type="project" value="InterPro"/>
</dbReference>
<dbReference type="GO" id="GO:0006412">
    <property type="term" value="P:translation"/>
    <property type="evidence" value="ECO:0007669"/>
    <property type="project" value="UniProtKB-UniRule"/>
</dbReference>
<dbReference type="FunFam" id="1.20.5.1150:FF:000001">
    <property type="entry name" value="30S ribosomal protein S21"/>
    <property type="match status" value="1"/>
</dbReference>
<dbReference type="Gene3D" id="1.20.5.1150">
    <property type="entry name" value="Ribosomal protein S8"/>
    <property type="match status" value="1"/>
</dbReference>
<dbReference type="HAMAP" id="MF_00358">
    <property type="entry name" value="Ribosomal_bS21"/>
    <property type="match status" value="1"/>
</dbReference>
<dbReference type="InterPro" id="IPR001911">
    <property type="entry name" value="Ribosomal_bS21"/>
</dbReference>
<dbReference type="InterPro" id="IPR018278">
    <property type="entry name" value="Ribosomal_bS21_CS"/>
</dbReference>
<dbReference type="InterPro" id="IPR038380">
    <property type="entry name" value="Ribosomal_bS21_sf"/>
</dbReference>
<dbReference type="NCBIfam" id="TIGR00030">
    <property type="entry name" value="S21p"/>
    <property type="match status" value="1"/>
</dbReference>
<dbReference type="PANTHER" id="PTHR21109">
    <property type="entry name" value="MITOCHONDRIAL 28S RIBOSOMAL PROTEIN S21"/>
    <property type="match status" value="1"/>
</dbReference>
<dbReference type="PANTHER" id="PTHR21109:SF22">
    <property type="entry name" value="SMALL RIBOSOMAL SUBUNIT PROTEIN BS21"/>
    <property type="match status" value="1"/>
</dbReference>
<dbReference type="Pfam" id="PF01165">
    <property type="entry name" value="Ribosomal_S21"/>
    <property type="match status" value="1"/>
</dbReference>
<dbReference type="PRINTS" id="PR00976">
    <property type="entry name" value="RIBOSOMALS21"/>
</dbReference>
<dbReference type="PROSITE" id="PS01181">
    <property type="entry name" value="RIBOSOMAL_S21"/>
    <property type="match status" value="1"/>
</dbReference>
<protein>
    <recommendedName>
        <fullName evidence="2">Small ribosomal subunit protein bS21</fullName>
    </recommendedName>
    <alternativeName>
        <fullName evidence="4">30S ribosomal protein S21</fullName>
    </alternativeName>
</protein>
<gene>
    <name evidence="2" type="primary">rpsU</name>
    <name type="ordered locus">SBO_2923</name>
</gene>